<evidence type="ECO:0000250" key="1"/>
<evidence type="ECO:0000250" key="2">
    <source>
        <dbReference type="UniProtKB" id="Q5U2Y6"/>
    </source>
</evidence>
<evidence type="ECO:0000250" key="3">
    <source>
        <dbReference type="UniProtKB" id="Q9UBB9"/>
    </source>
</evidence>
<evidence type="ECO:0000255" key="4">
    <source>
        <dbReference type="PROSITE-ProRule" id="PRU00092"/>
    </source>
</evidence>
<evidence type="ECO:0000256" key="5">
    <source>
        <dbReference type="SAM" id="MobiDB-lite"/>
    </source>
</evidence>
<evidence type="ECO:0000305" key="6"/>
<proteinExistence type="evidence at transcript level"/>
<dbReference type="EMBL" id="DQ342027">
    <property type="protein sequence ID" value="ABC69919.1"/>
    <property type="molecule type" value="mRNA"/>
</dbReference>
<dbReference type="RefSeq" id="NP_001073589.1">
    <property type="nucleotide sequence ID" value="NM_001080120.1"/>
</dbReference>
<dbReference type="RefSeq" id="XP_015005437.1">
    <property type="nucleotide sequence ID" value="XM_015149951.2"/>
</dbReference>
<dbReference type="RefSeq" id="XP_015005438.1">
    <property type="nucleotide sequence ID" value="XM_015149952.2"/>
</dbReference>
<dbReference type="RefSeq" id="XP_015005439.1">
    <property type="nucleotide sequence ID" value="XM_015149953.2"/>
</dbReference>
<dbReference type="SMR" id="A1XD94"/>
<dbReference type="FunCoup" id="A1XD94">
    <property type="interactions" value="3014"/>
</dbReference>
<dbReference type="STRING" id="9544.ENSMMUP00000077896"/>
<dbReference type="PaxDb" id="9544-ENSMMUP00000030871"/>
<dbReference type="Ensembl" id="ENSMMUT00000032991.4">
    <property type="protein sequence ID" value="ENSMMUP00000030871.2"/>
    <property type="gene ID" value="ENSMMUG00000023446.4"/>
</dbReference>
<dbReference type="Ensembl" id="ENSMMUT00000079351.1">
    <property type="protein sequence ID" value="ENSMMUP00000072253.1"/>
    <property type="gene ID" value="ENSMMUG00000023446.4"/>
</dbReference>
<dbReference type="Ensembl" id="ENSMMUT00000095818.1">
    <property type="protein sequence ID" value="ENSMMUP00000063959.1"/>
    <property type="gene ID" value="ENSMMUG00000023446.4"/>
</dbReference>
<dbReference type="Ensembl" id="ENSMMUT00000098887.1">
    <property type="protein sequence ID" value="ENSMMUP00000077896.1"/>
    <property type="gene ID" value="ENSMMUG00000023446.4"/>
</dbReference>
<dbReference type="Ensembl" id="ENSMMUT00000107144.1">
    <property type="protein sequence ID" value="ENSMMUP00000074042.1"/>
    <property type="gene ID" value="ENSMMUG00000023446.4"/>
</dbReference>
<dbReference type="GeneID" id="712691"/>
<dbReference type="KEGG" id="mcc:712691"/>
<dbReference type="CTD" id="24144"/>
<dbReference type="VEuPathDB" id="HostDB:ENSMMUG00000023446"/>
<dbReference type="VGNC" id="VGNC:78399">
    <property type="gene designation" value="TFIP11"/>
</dbReference>
<dbReference type="eggNOG" id="KOG2184">
    <property type="taxonomic scope" value="Eukaryota"/>
</dbReference>
<dbReference type="GeneTree" id="ENSGT00390000012739"/>
<dbReference type="HOGENOM" id="CLU_007977_1_1_1"/>
<dbReference type="InParanoid" id="A1XD94"/>
<dbReference type="OMA" id="CEQDIIQ"/>
<dbReference type="OrthoDB" id="4822at2759"/>
<dbReference type="TreeFam" id="TF314887"/>
<dbReference type="Proteomes" id="UP000006718">
    <property type="component" value="Chromosome 10"/>
</dbReference>
<dbReference type="Bgee" id="ENSMMUG00000023446">
    <property type="expression patterns" value="Expressed in fibroblast and 22 other cell types or tissues"/>
</dbReference>
<dbReference type="ExpressionAtlas" id="A1XD94">
    <property type="expression patterns" value="baseline"/>
</dbReference>
<dbReference type="GO" id="GO:0071013">
    <property type="term" value="C:catalytic step 2 spliceosome"/>
    <property type="evidence" value="ECO:0007669"/>
    <property type="project" value="Ensembl"/>
</dbReference>
<dbReference type="GO" id="GO:0000781">
    <property type="term" value="C:chromosome, telomeric region"/>
    <property type="evidence" value="ECO:0007669"/>
    <property type="project" value="Ensembl"/>
</dbReference>
<dbReference type="GO" id="GO:0005737">
    <property type="term" value="C:cytoplasm"/>
    <property type="evidence" value="ECO:0007669"/>
    <property type="project" value="UniProtKB-SubCell"/>
</dbReference>
<dbReference type="GO" id="GO:0031012">
    <property type="term" value="C:extracellular matrix"/>
    <property type="evidence" value="ECO:0007669"/>
    <property type="project" value="Ensembl"/>
</dbReference>
<dbReference type="GO" id="GO:0016607">
    <property type="term" value="C:nuclear speck"/>
    <property type="evidence" value="ECO:0007669"/>
    <property type="project" value="Ensembl"/>
</dbReference>
<dbReference type="GO" id="GO:0005730">
    <property type="term" value="C:nucleolus"/>
    <property type="evidence" value="ECO:0007669"/>
    <property type="project" value="Ensembl"/>
</dbReference>
<dbReference type="GO" id="GO:0005681">
    <property type="term" value="C:spliceosomal complex"/>
    <property type="evidence" value="ECO:0000250"/>
    <property type="project" value="UniProtKB"/>
</dbReference>
<dbReference type="GO" id="GO:0071008">
    <property type="term" value="C:U2-type post-mRNA release spliceosomal complex"/>
    <property type="evidence" value="ECO:0000250"/>
    <property type="project" value="UniProtKB"/>
</dbReference>
<dbReference type="GO" id="GO:0003676">
    <property type="term" value="F:nucleic acid binding"/>
    <property type="evidence" value="ECO:0007669"/>
    <property type="project" value="InterPro"/>
</dbReference>
<dbReference type="GO" id="GO:0031214">
    <property type="term" value="P:biomineral tissue development"/>
    <property type="evidence" value="ECO:0007669"/>
    <property type="project" value="UniProtKB-KW"/>
</dbReference>
<dbReference type="GO" id="GO:0031333">
    <property type="term" value="P:negative regulation of protein-containing complex assembly"/>
    <property type="evidence" value="ECO:0007669"/>
    <property type="project" value="Ensembl"/>
</dbReference>
<dbReference type="GO" id="GO:0000390">
    <property type="term" value="P:spliceosomal complex disassembly"/>
    <property type="evidence" value="ECO:0000250"/>
    <property type="project" value="UniProtKB"/>
</dbReference>
<dbReference type="InterPro" id="IPR000467">
    <property type="entry name" value="G_patch_dom"/>
</dbReference>
<dbReference type="InterPro" id="IPR022783">
    <property type="entry name" value="GCFC_dom"/>
</dbReference>
<dbReference type="InterPro" id="IPR022159">
    <property type="entry name" value="STIP/TFIP11_N"/>
</dbReference>
<dbReference type="InterPro" id="IPR024933">
    <property type="entry name" value="TFP11"/>
</dbReference>
<dbReference type="InterPro" id="IPR045211">
    <property type="entry name" value="TFP11/STIP/Ntr1"/>
</dbReference>
<dbReference type="PANTHER" id="PTHR23329:SF1">
    <property type="entry name" value="TUFTELIN-INTERACTING PROTEIN 11"/>
    <property type="match status" value="1"/>
</dbReference>
<dbReference type="PANTHER" id="PTHR23329">
    <property type="entry name" value="TUFTELIN-INTERACTING PROTEIN 11-RELATED"/>
    <property type="match status" value="1"/>
</dbReference>
<dbReference type="Pfam" id="PF01585">
    <property type="entry name" value="G-patch"/>
    <property type="match status" value="1"/>
</dbReference>
<dbReference type="Pfam" id="PF07842">
    <property type="entry name" value="GCFC"/>
    <property type="match status" value="1"/>
</dbReference>
<dbReference type="Pfam" id="PF12457">
    <property type="entry name" value="TIP_N"/>
    <property type="match status" value="1"/>
</dbReference>
<dbReference type="PIRSF" id="PIRSF017706">
    <property type="entry name" value="TFIP11"/>
    <property type="match status" value="1"/>
</dbReference>
<dbReference type="SMART" id="SM00443">
    <property type="entry name" value="G_patch"/>
    <property type="match status" value="1"/>
</dbReference>
<dbReference type="PROSITE" id="PS50174">
    <property type="entry name" value="G_PATCH"/>
    <property type="match status" value="1"/>
</dbReference>
<comment type="function">
    <text evidence="1">Involved in pre-mRNA splicing, specifically in spliceosome disassembly during late-stage splicing events. Intron turnover seems to proceed through reactions in two lariat-intron associated complexes termed Intron Large (IL) and Intron Small (IS). In cooperation with DHX15 seems to mediate the transition of the U2, U5 and U6 snRNP-containing IL complex to the snRNP-free IS complex leading to efficient debranching and turnover of excised introns. May play a role in the differentiation of ameloblasts and odontoblasts or in the forming of the enamel extracellular matrix (By similarity).</text>
</comment>
<comment type="subunit">
    <text evidence="1">Identified in the spliceosome C complex. Found in the Intron Large (IL) complex, a post-mRNA release spliceosomal complex containing the excised intron, U2, U5 and U6 snRNPs, and splicing factors. Interacts with TUFT1. Interacts with DHX15; indicative for a recruitment of DHX15 to the IL complex. Interacts with GCFC2 (By similarity).</text>
</comment>
<comment type="subcellular location">
    <subcellularLocation>
        <location evidence="1">Cytoplasm</location>
    </subcellularLocation>
    <subcellularLocation>
        <location evidence="1">Nucleus</location>
    </subcellularLocation>
    <text evidence="1">In the nucleus localizes to unique speckle domains in close proximity to nuclear speckles and not identical to paraspeckles.</text>
</comment>
<comment type="similarity">
    <text evidence="6">Belongs to the TFP11/STIP family.</text>
</comment>
<name>TFP11_MACMU</name>
<feature type="chain" id="PRO_0000342272" description="Tuftelin-interacting protein 11">
    <location>
        <begin position="1"/>
        <end position="837"/>
    </location>
</feature>
<feature type="domain" description="G-patch" evidence="4">
    <location>
        <begin position="149"/>
        <end position="195"/>
    </location>
</feature>
<feature type="region of interest" description="Required for interaction with DHX15" evidence="1">
    <location>
        <begin position="1"/>
        <end position="50"/>
    </location>
</feature>
<feature type="region of interest" description="Disordered" evidence="5">
    <location>
        <begin position="1"/>
        <end position="21"/>
    </location>
</feature>
<feature type="region of interest" description="Disordered" evidence="5">
    <location>
        <begin position="53"/>
        <end position="72"/>
    </location>
</feature>
<feature type="region of interest" description="Disordered" evidence="5">
    <location>
        <begin position="85"/>
        <end position="133"/>
    </location>
</feature>
<feature type="region of interest" description="Disordered" evidence="5">
    <location>
        <begin position="179"/>
        <end position="236"/>
    </location>
</feature>
<feature type="region of interest" description="Required for nuclear speckle localization" evidence="1">
    <location>
        <begin position="710"/>
        <end position="734"/>
    </location>
</feature>
<feature type="short sequence motif" description="Nuclear localization signal" evidence="1">
    <location>
        <begin position="700"/>
        <end position="705"/>
    </location>
</feature>
<feature type="compositionally biased region" description="Basic and acidic residues" evidence="5">
    <location>
        <begin position="1"/>
        <end position="13"/>
    </location>
</feature>
<feature type="compositionally biased region" description="Basic and acidic residues" evidence="5">
    <location>
        <begin position="53"/>
        <end position="64"/>
    </location>
</feature>
<feature type="compositionally biased region" description="Acidic residues" evidence="5">
    <location>
        <begin position="91"/>
        <end position="102"/>
    </location>
</feature>
<feature type="compositionally biased region" description="Basic and acidic residues" evidence="5">
    <location>
        <begin position="103"/>
        <end position="116"/>
    </location>
</feature>
<feature type="compositionally biased region" description="Basic and acidic residues" evidence="5">
    <location>
        <begin position="217"/>
        <end position="231"/>
    </location>
</feature>
<feature type="modified residue" description="Phosphoserine" evidence="2">
    <location>
        <position position="2"/>
    </location>
</feature>
<feature type="modified residue" description="Phosphoserine" evidence="3">
    <location>
        <position position="59"/>
    </location>
</feature>
<feature type="modified residue" description="Phosphoserine" evidence="3">
    <location>
        <position position="98"/>
    </location>
</feature>
<feature type="modified residue" description="Phosphoserine" evidence="3">
    <location>
        <position position="144"/>
    </location>
</feature>
<feature type="modified residue" description="Phosphoserine" evidence="3">
    <location>
        <position position="210"/>
    </location>
</feature>
<protein>
    <recommendedName>
        <fullName>Tuftelin-interacting protein 11</fullName>
    </recommendedName>
    <alternativeName>
        <fullName>Septin and tuftelin-interacting protein 1</fullName>
        <shortName>STIP-1</shortName>
    </alternativeName>
</protein>
<organism>
    <name type="scientific">Macaca mulatta</name>
    <name type="common">Rhesus macaque</name>
    <dbReference type="NCBI Taxonomy" id="9544"/>
    <lineage>
        <taxon>Eukaryota</taxon>
        <taxon>Metazoa</taxon>
        <taxon>Chordata</taxon>
        <taxon>Craniata</taxon>
        <taxon>Vertebrata</taxon>
        <taxon>Euteleostomi</taxon>
        <taxon>Mammalia</taxon>
        <taxon>Eutheria</taxon>
        <taxon>Euarchontoglires</taxon>
        <taxon>Primates</taxon>
        <taxon>Haplorrhini</taxon>
        <taxon>Catarrhini</taxon>
        <taxon>Cercopithecidae</taxon>
        <taxon>Cercopithecinae</taxon>
        <taxon>Macaca</taxon>
    </lineage>
</organism>
<gene>
    <name type="primary">TFIP11</name>
    <name type="synonym">STIP</name>
</gene>
<keyword id="KW-0091">Biomineralization</keyword>
<keyword id="KW-0963">Cytoplasm</keyword>
<keyword id="KW-0507">mRNA processing</keyword>
<keyword id="KW-0508">mRNA splicing</keyword>
<keyword id="KW-0539">Nucleus</keyword>
<keyword id="KW-0597">Phosphoprotein</keyword>
<keyword id="KW-1185">Reference proteome</keyword>
<keyword id="KW-0747">Spliceosome</keyword>
<reference key="1">
    <citation type="journal article" date="2007" name="Exp. Cell Res.">
        <title>Characterization of STIP, a multi-domain nuclear protein, highly conserved in metazoans, and essential for embryogenesis in Caenorhabditis elegans.</title>
        <authorList>
            <person name="Ji Q."/>
            <person name="Huang C.-H."/>
            <person name="Peng J."/>
            <person name="Hashmi S."/>
            <person name="Ye T."/>
            <person name="Chen Y."/>
        </authorList>
    </citation>
    <scope>NUCLEOTIDE SEQUENCE [MRNA]</scope>
</reference>
<sequence length="837" mass="96848">MSLSHLYRDGEGRIDDDDDERENFEITDWDLQNEFNPNRQRHWQTKEEATYGVWAERDSDDERPSFGGKRARDYSAPVNFISAGLKKGAAEEAELEDSDDEERPVKQDDFPKDFGPRKLKTGGNFKPSQKGFAGGTKSFMDFGSWERHTKGIGQKLLQKMGYVPGRGLGKNAQGIINPIEAKQRKGKGAVGAYGSERTTQSMQDFPVVDSEEEAEEEFQKELSQWRKDPSGSKKKPKYSYKTVEELKAKGRISKKLTAPQKELSQVKVIDMTGREQKVYYSYSQISHKHNVPDDGLPLQSQQLPQSGKEAKAPGFALPELEHNLQLLIDLTEQEIIQNDRQLQYERDMVVNLFHELEKMTEVLDHEERVISNLSKVLEMVEECERRMQPDCSNPLTLDECARIFETLQDKYYEEYRMSDRVDLAVAIVYPLMKEYFKEWDPLKDCTYGTEIISKWKSLLENDQLLSHGGQDLSADAFHRLIWEVWMPFVRNIVTQWQPRNCDPMVDFLDSWVHIIPVWILDNILDQLIFPKLQKEVENWNPLTDTVPIHSWIHPWLPLMQARLEPLYSPIRSKLSSALQKWHPSDSSAKLILQPWKDVFTPGSWEAFMVKNIVPKLGMCLGELVINPHQQHMDAFYWVIDWEGMISVSSLVGLLEKHFFPKWLQVLCSWLSNSPNYEEITKWYLGWKSMFSDQVLAHPSVKDKFNEALDIMNRAVSSNVGAYMQPGARENIAYLTHTERRKDFQYEAMQERREAENMAQRGIGVAASSVPMNFKDLIETKAEEHNIVFMPVIGKRHEGKQLYTFGRIVIYIDRGVVFVQGEKTWVPTSLQSLIDMAK</sequence>
<accession>A1XD94</accession>